<gene>
    <name evidence="1" type="primary">kdpB</name>
    <name type="ordered locus">Spro_1247</name>
</gene>
<accession>A8GB61</accession>
<dbReference type="EC" id="7.2.2.6" evidence="1"/>
<dbReference type="EMBL" id="CP000826">
    <property type="protein sequence ID" value="ABV40351.1"/>
    <property type="molecule type" value="Genomic_DNA"/>
</dbReference>
<dbReference type="SMR" id="A8GB61"/>
<dbReference type="STRING" id="399741.Spro_1247"/>
<dbReference type="KEGG" id="spe:Spro_1247"/>
<dbReference type="eggNOG" id="COG2216">
    <property type="taxonomic scope" value="Bacteria"/>
</dbReference>
<dbReference type="HOGENOM" id="CLU_025728_2_0_6"/>
<dbReference type="OrthoDB" id="9814270at2"/>
<dbReference type="GO" id="GO:0005886">
    <property type="term" value="C:plasma membrane"/>
    <property type="evidence" value="ECO:0007669"/>
    <property type="project" value="UniProtKB-SubCell"/>
</dbReference>
<dbReference type="GO" id="GO:0005524">
    <property type="term" value="F:ATP binding"/>
    <property type="evidence" value="ECO:0007669"/>
    <property type="project" value="UniProtKB-UniRule"/>
</dbReference>
<dbReference type="GO" id="GO:0016887">
    <property type="term" value="F:ATP hydrolysis activity"/>
    <property type="evidence" value="ECO:0007669"/>
    <property type="project" value="InterPro"/>
</dbReference>
<dbReference type="GO" id="GO:0000287">
    <property type="term" value="F:magnesium ion binding"/>
    <property type="evidence" value="ECO:0007669"/>
    <property type="project" value="UniProtKB-UniRule"/>
</dbReference>
<dbReference type="GO" id="GO:0008556">
    <property type="term" value="F:P-type potassium transmembrane transporter activity"/>
    <property type="evidence" value="ECO:0007669"/>
    <property type="project" value="UniProtKB-UniRule"/>
</dbReference>
<dbReference type="CDD" id="cd02078">
    <property type="entry name" value="P-type_ATPase_K"/>
    <property type="match status" value="1"/>
</dbReference>
<dbReference type="FunFam" id="2.70.150.10:FF:000010">
    <property type="entry name" value="Potassium-transporting ATPase ATP-binding subunit"/>
    <property type="match status" value="1"/>
</dbReference>
<dbReference type="FunFam" id="3.40.1110.10:FF:000007">
    <property type="entry name" value="Potassium-transporting ATPase ATP-binding subunit"/>
    <property type="match status" value="1"/>
</dbReference>
<dbReference type="Gene3D" id="3.40.1110.10">
    <property type="entry name" value="Calcium-transporting ATPase, cytoplasmic domain N"/>
    <property type="match status" value="1"/>
</dbReference>
<dbReference type="Gene3D" id="2.70.150.10">
    <property type="entry name" value="Calcium-transporting ATPase, cytoplasmic transduction domain A"/>
    <property type="match status" value="1"/>
</dbReference>
<dbReference type="Gene3D" id="3.40.50.1000">
    <property type="entry name" value="HAD superfamily/HAD-like"/>
    <property type="match status" value="1"/>
</dbReference>
<dbReference type="HAMAP" id="MF_00285">
    <property type="entry name" value="KdpB"/>
    <property type="match status" value="1"/>
</dbReference>
<dbReference type="InterPro" id="IPR023299">
    <property type="entry name" value="ATPase_P-typ_cyto_dom_N"/>
</dbReference>
<dbReference type="InterPro" id="IPR018303">
    <property type="entry name" value="ATPase_P-typ_P_site"/>
</dbReference>
<dbReference type="InterPro" id="IPR023298">
    <property type="entry name" value="ATPase_P-typ_TM_dom_sf"/>
</dbReference>
<dbReference type="InterPro" id="IPR008250">
    <property type="entry name" value="ATPase_P-typ_transduc_dom_A_sf"/>
</dbReference>
<dbReference type="InterPro" id="IPR036412">
    <property type="entry name" value="HAD-like_sf"/>
</dbReference>
<dbReference type="InterPro" id="IPR023214">
    <property type="entry name" value="HAD_sf"/>
</dbReference>
<dbReference type="InterPro" id="IPR006391">
    <property type="entry name" value="P-type_ATPase_bsu_IA"/>
</dbReference>
<dbReference type="InterPro" id="IPR001757">
    <property type="entry name" value="P_typ_ATPase"/>
</dbReference>
<dbReference type="InterPro" id="IPR044492">
    <property type="entry name" value="P_typ_ATPase_HD_dom"/>
</dbReference>
<dbReference type="NCBIfam" id="TIGR01494">
    <property type="entry name" value="ATPase_P-type"/>
    <property type="match status" value="2"/>
</dbReference>
<dbReference type="NCBIfam" id="TIGR01497">
    <property type="entry name" value="kdpB"/>
    <property type="match status" value="1"/>
</dbReference>
<dbReference type="PANTHER" id="PTHR43743">
    <property type="entry name" value="POTASSIUM-TRANSPORTING ATPASE ATP-BINDING SUBUNIT"/>
    <property type="match status" value="1"/>
</dbReference>
<dbReference type="PANTHER" id="PTHR43743:SF1">
    <property type="entry name" value="POTASSIUM-TRANSPORTING ATPASE ATP-BINDING SUBUNIT"/>
    <property type="match status" value="1"/>
</dbReference>
<dbReference type="Pfam" id="PF00122">
    <property type="entry name" value="E1-E2_ATPase"/>
    <property type="match status" value="1"/>
</dbReference>
<dbReference type="Pfam" id="PF00702">
    <property type="entry name" value="Hydrolase"/>
    <property type="match status" value="1"/>
</dbReference>
<dbReference type="PRINTS" id="PR00119">
    <property type="entry name" value="CATATPASE"/>
</dbReference>
<dbReference type="SFLD" id="SFLDS00003">
    <property type="entry name" value="Haloacid_Dehalogenase"/>
    <property type="match status" value="1"/>
</dbReference>
<dbReference type="SFLD" id="SFLDF00027">
    <property type="entry name" value="p-type_atpase"/>
    <property type="match status" value="1"/>
</dbReference>
<dbReference type="SUPFAM" id="SSF81653">
    <property type="entry name" value="Calcium ATPase, transduction domain A"/>
    <property type="match status" value="1"/>
</dbReference>
<dbReference type="SUPFAM" id="SSF81665">
    <property type="entry name" value="Calcium ATPase, transmembrane domain M"/>
    <property type="match status" value="1"/>
</dbReference>
<dbReference type="SUPFAM" id="SSF56784">
    <property type="entry name" value="HAD-like"/>
    <property type="match status" value="1"/>
</dbReference>
<dbReference type="PROSITE" id="PS00154">
    <property type="entry name" value="ATPASE_E1_E2"/>
    <property type="match status" value="1"/>
</dbReference>
<protein>
    <recommendedName>
        <fullName evidence="1">Potassium-transporting ATPase ATP-binding subunit</fullName>
        <ecNumber evidence="1">7.2.2.6</ecNumber>
    </recommendedName>
    <alternativeName>
        <fullName evidence="1">ATP phosphohydrolase [potassium-transporting] B chain</fullName>
    </alternativeName>
    <alternativeName>
        <fullName evidence="1">Potassium-binding and translocating subunit B</fullName>
    </alternativeName>
    <alternativeName>
        <fullName evidence="1">Potassium-translocating ATPase B chain</fullName>
    </alternativeName>
</protein>
<sequence length="689" mass="72833">MTRKQRALFEPALVRTALIDALKKLDPRTQWRNPVMFVVYIGSILTTAIWLAILAKQTDGSAAFTGSIAMWLWFTVLFANFAEALAEGRSKAQAESLRGTKKTSWAKKLAGPRREGATEKVSAESLRKGDVVLVEAGDTIPCDGEVLEGGASVDESAITGESAPVIRESGGDFSSVTGGTRVLSDWLVVQCSVNPGETFLDRMIAMVEGAKRRKTPNEVALTILLVALTLVFVLATATLFPFSQYSVDAANGGSVVSITVLVALLVCLIPTTIGGLLSAIGVAGMSRMLGANVIATSGRAVEAAGDVDVLLLDKTGTITLGNRQASEFLPAPGVKEQELADAAQLSSLADETPEGRSIVVLAKQRFNLRERDLQALNATFVPFSAQTRMSGVNVQDRMIRKGAVDAIRRHVESNQGHFPQAVDDLVASVARTGGTPLVVAEGPRVLGVVALKDIVKGGIKERFVELRKMGIKTVMITGDNPLTAAAIAAEAGVDDFLSEATPEAKLALIRQYQAEGRLVAMTGDGTNDAPALAQADVAVAMNSGTQAAKEAGNMVDLDSNPTKLIEVVHIGKQMLMTRGSLTTFSIANDVAKYFAIIPAAFAATYPQLNALNVMHLHSPASAIMSAVIFNALVIVFLIPLALKGVSYKPMSAAALLRRNLWLYGVGGLLVPFVGIKLIDLLLVALHIAG</sequence>
<feature type="chain" id="PRO_1000059253" description="Potassium-transporting ATPase ATP-binding subunit">
    <location>
        <begin position="1"/>
        <end position="689"/>
    </location>
</feature>
<feature type="transmembrane region" description="Helical" evidence="1">
    <location>
        <begin position="35"/>
        <end position="55"/>
    </location>
</feature>
<feature type="transmembrane region" description="Helical" evidence="1">
    <location>
        <begin position="62"/>
        <end position="82"/>
    </location>
</feature>
<feature type="transmembrane region" description="Helical" evidence="1">
    <location>
        <begin position="220"/>
        <end position="240"/>
    </location>
</feature>
<feature type="transmembrane region" description="Helical" evidence="1">
    <location>
        <begin position="260"/>
        <end position="280"/>
    </location>
</feature>
<feature type="transmembrane region" description="Helical" evidence="1">
    <location>
        <begin position="594"/>
        <end position="614"/>
    </location>
</feature>
<feature type="transmembrane region" description="Helical" evidence="1">
    <location>
        <begin position="622"/>
        <end position="642"/>
    </location>
</feature>
<feature type="transmembrane region" description="Helical" evidence="1">
    <location>
        <begin position="665"/>
        <end position="685"/>
    </location>
</feature>
<feature type="active site" description="4-aspartylphosphate intermediate" evidence="1">
    <location>
        <position position="313"/>
    </location>
</feature>
<feature type="binding site" evidence="1">
    <location>
        <position position="350"/>
    </location>
    <ligand>
        <name>ATP</name>
        <dbReference type="ChEBI" id="CHEBI:30616"/>
    </ligand>
</feature>
<feature type="binding site" evidence="1">
    <location>
        <position position="354"/>
    </location>
    <ligand>
        <name>ATP</name>
        <dbReference type="ChEBI" id="CHEBI:30616"/>
    </ligand>
</feature>
<feature type="binding site" evidence="1">
    <location>
        <begin position="383"/>
        <end position="390"/>
    </location>
    <ligand>
        <name>ATP</name>
        <dbReference type="ChEBI" id="CHEBI:30616"/>
    </ligand>
</feature>
<feature type="binding site" evidence="1">
    <location>
        <position position="401"/>
    </location>
    <ligand>
        <name>ATP</name>
        <dbReference type="ChEBI" id="CHEBI:30616"/>
    </ligand>
</feature>
<feature type="binding site" evidence="1">
    <location>
        <position position="524"/>
    </location>
    <ligand>
        <name>Mg(2+)</name>
        <dbReference type="ChEBI" id="CHEBI:18420"/>
    </ligand>
</feature>
<feature type="binding site" evidence="1">
    <location>
        <position position="528"/>
    </location>
    <ligand>
        <name>Mg(2+)</name>
        <dbReference type="ChEBI" id="CHEBI:18420"/>
    </ligand>
</feature>
<reference key="1">
    <citation type="submission" date="2007-09" db="EMBL/GenBank/DDBJ databases">
        <title>Complete sequence of chromosome of Serratia proteamaculans 568.</title>
        <authorList>
            <consortium name="US DOE Joint Genome Institute"/>
            <person name="Copeland A."/>
            <person name="Lucas S."/>
            <person name="Lapidus A."/>
            <person name="Barry K."/>
            <person name="Glavina del Rio T."/>
            <person name="Dalin E."/>
            <person name="Tice H."/>
            <person name="Pitluck S."/>
            <person name="Chain P."/>
            <person name="Malfatti S."/>
            <person name="Shin M."/>
            <person name="Vergez L."/>
            <person name="Schmutz J."/>
            <person name="Larimer F."/>
            <person name="Land M."/>
            <person name="Hauser L."/>
            <person name="Kyrpides N."/>
            <person name="Kim E."/>
            <person name="Taghavi S."/>
            <person name="Newman L."/>
            <person name="Vangronsveld J."/>
            <person name="van der Lelie D."/>
            <person name="Richardson P."/>
        </authorList>
    </citation>
    <scope>NUCLEOTIDE SEQUENCE [LARGE SCALE GENOMIC DNA]</scope>
    <source>
        <strain>568</strain>
    </source>
</reference>
<evidence type="ECO:0000255" key="1">
    <source>
        <dbReference type="HAMAP-Rule" id="MF_00285"/>
    </source>
</evidence>
<keyword id="KW-0067">ATP-binding</keyword>
<keyword id="KW-0997">Cell inner membrane</keyword>
<keyword id="KW-1003">Cell membrane</keyword>
<keyword id="KW-0406">Ion transport</keyword>
<keyword id="KW-0460">Magnesium</keyword>
<keyword id="KW-0472">Membrane</keyword>
<keyword id="KW-0479">Metal-binding</keyword>
<keyword id="KW-0547">Nucleotide-binding</keyword>
<keyword id="KW-0597">Phosphoprotein</keyword>
<keyword id="KW-0630">Potassium</keyword>
<keyword id="KW-0633">Potassium transport</keyword>
<keyword id="KW-1278">Translocase</keyword>
<keyword id="KW-0812">Transmembrane</keyword>
<keyword id="KW-1133">Transmembrane helix</keyword>
<keyword id="KW-0813">Transport</keyword>
<comment type="function">
    <text evidence="1">Part of the high-affinity ATP-driven potassium transport (or Kdp) system, which catalyzes the hydrolysis of ATP coupled with the electrogenic transport of potassium into the cytoplasm. This subunit is responsible for energy coupling to the transport system and for the release of the potassium ions to the cytoplasm.</text>
</comment>
<comment type="catalytic activity">
    <reaction evidence="1">
        <text>K(+)(out) + ATP + H2O = K(+)(in) + ADP + phosphate + H(+)</text>
        <dbReference type="Rhea" id="RHEA:16777"/>
        <dbReference type="ChEBI" id="CHEBI:15377"/>
        <dbReference type="ChEBI" id="CHEBI:15378"/>
        <dbReference type="ChEBI" id="CHEBI:29103"/>
        <dbReference type="ChEBI" id="CHEBI:30616"/>
        <dbReference type="ChEBI" id="CHEBI:43474"/>
        <dbReference type="ChEBI" id="CHEBI:456216"/>
        <dbReference type="EC" id="7.2.2.6"/>
    </reaction>
    <physiologicalReaction direction="left-to-right" evidence="1">
        <dbReference type="Rhea" id="RHEA:16778"/>
    </physiologicalReaction>
</comment>
<comment type="subunit">
    <text evidence="1">The system is composed of three essential subunits: KdpA, KdpB and KdpC.</text>
</comment>
<comment type="subcellular location">
    <subcellularLocation>
        <location evidence="1">Cell inner membrane</location>
        <topology evidence="1">Multi-pass membrane protein</topology>
    </subcellularLocation>
</comment>
<comment type="similarity">
    <text evidence="1">Belongs to the cation transport ATPase (P-type) (TC 3.A.3) family. Type IA subfamily.</text>
</comment>
<name>KDPB_SERP5</name>
<organism>
    <name type="scientific">Serratia proteamaculans (strain 568)</name>
    <dbReference type="NCBI Taxonomy" id="399741"/>
    <lineage>
        <taxon>Bacteria</taxon>
        <taxon>Pseudomonadati</taxon>
        <taxon>Pseudomonadota</taxon>
        <taxon>Gammaproteobacteria</taxon>
        <taxon>Enterobacterales</taxon>
        <taxon>Yersiniaceae</taxon>
        <taxon>Serratia</taxon>
    </lineage>
</organism>
<proteinExistence type="inferred from homology"/>